<geneLocation type="chloroplast"/>
<proteinExistence type="inferred from homology"/>
<dbReference type="EMBL" id="AB002583">
    <property type="protein sequence ID" value="BAC76113.1"/>
    <property type="molecule type" value="Genomic_DNA"/>
</dbReference>
<dbReference type="RefSeq" id="NP_848951.1">
    <property type="nucleotide sequence ID" value="NC_004799.1"/>
</dbReference>
<dbReference type="SMR" id="Q85G77"/>
<dbReference type="STRING" id="280699.Q85G77"/>
<dbReference type="EnsemblPlants" id="CMV021CT">
    <property type="protein sequence ID" value="CMV021CT"/>
    <property type="gene ID" value="CMV021C"/>
</dbReference>
<dbReference type="GeneID" id="844897"/>
<dbReference type="Gramene" id="CMV021CT">
    <property type="protein sequence ID" value="CMV021CT"/>
    <property type="gene ID" value="CMV021C"/>
</dbReference>
<dbReference type="KEGG" id="cme:CymeCp019"/>
<dbReference type="eggNOG" id="ENOG502QUHV">
    <property type="taxonomic scope" value="Eukaryota"/>
</dbReference>
<dbReference type="HOGENOM" id="CLU_054919_3_1_1"/>
<dbReference type="Proteomes" id="UP000007014">
    <property type="component" value="Chloroplast"/>
</dbReference>
<dbReference type="GO" id="GO:0009507">
    <property type="term" value="C:chloroplast"/>
    <property type="evidence" value="ECO:0007669"/>
    <property type="project" value="UniProtKB-SubCell"/>
</dbReference>
<dbReference type="GO" id="GO:0005829">
    <property type="term" value="C:cytosol"/>
    <property type="evidence" value="ECO:0007669"/>
    <property type="project" value="TreeGrafter"/>
</dbReference>
<dbReference type="GO" id="GO:0016020">
    <property type="term" value="C:membrane"/>
    <property type="evidence" value="ECO:0007669"/>
    <property type="project" value="TreeGrafter"/>
</dbReference>
<dbReference type="GO" id="GO:0043022">
    <property type="term" value="F:ribosome binding"/>
    <property type="evidence" value="ECO:0007669"/>
    <property type="project" value="TreeGrafter"/>
</dbReference>
<dbReference type="GO" id="GO:0003743">
    <property type="term" value="F:translation initiation factor activity"/>
    <property type="evidence" value="ECO:0007669"/>
    <property type="project" value="UniProtKB-UniRule"/>
</dbReference>
<dbReference type="GO" id="GO:0032790">
    <property type="term" value="P:ribosome disassembly"/>
    <property type="evidence" value="ECO:0007669"/>
    <property type="project" value="TreeGrafter"/>
</dbReference>
<dbReference type="Gene3D" id="3.30.110.10">
    <property type="entry name" value="Translation initiation factor 3 (IF-3), C-terminal domain"/>
    <property type="match status" value="1"/>
</dbReference>
<dbReference type="Gene3D" id="3.10.20.80">
    <property type="entry name" value="Translation initiation factor 3 (IF-3), N-terminal domain"/>
    <property type="match status" value="1"/>
</dbReference>
<dbReference type="HAMAP" id="MF_00080">
    <property type="entry name" value="IF_3"/>
    <property type="match status" value="1"/>
</dbReference>
<dbReference type="InterPro" id="IPR036788">
    <property type="entry name" value="T_IF-3_C_sf"/>
</dbReference>
<dbReference type="InterPro" id="IPR036787">
    <property type="entry name" value="T_IF-3_N_sf"/>
</dbReference>
<dbReference type="InterPro" id="IPR019813">
    <property type="entry name" value="Translation_initiation_fac3_CS"/>
</dbReference>
<dbReference type="InterPro" id="IPR001288">
    <property type="entry name" value="Translation_initiation_fac_3"/>
</dbReference>
<dbReference type="InterPro" id="IPR019815">
    <property type="entry name" value="Translation_initiation_fac_3_C"/>
</dbReference>
<dbReference type="InterPro" id="IPR019814">
    <property type="entry name" value="Translation_initiation_fac_3_N"/>
</dbReference>
<dbReference type="NCBIfam" id="TIGR00168">
    <property type="entry name" value="infC"/>
    <property type="match status" value="1"/>
</dbReference>
<dbReference type="PANTHER" id="PTHR10938">
    <property type="entry name" value="TRANSLATION INITIATION FACTOR IF-3"/>
    <property type="match status" value="1"/>
</dbReference>
<dbReference type="PANTHER" id="PTHR10938:SF0">
    <property type="entry name" value="TRANSLATION INITIATION FACTOR IF-3, MITOCHONDRIAL"/>
    <property type="match status" value="1"/>
</dbReference>
<dbReference type="Pfam" id="PF00707">
    <property type="entry name" value="IF3_C"/>
    <property type="match status" value="1"/>
</dbReference>
<dbReference type="Pfam" id="PF05198">
    <property type="entry name" value="IF3_N"/>
    <property type="match status" value="1"/>
</dbReference>
<dbReference type="SUPFAM" id="SSF55200">
    <property type="entry name" value="Translation initiation factor IF3, C-terminal domain"/>
    <property type="match status" value="1"/>
</dbReference>
<dbReference type="SUPFAM" id="SSF54364">
    <property type="entry name" value="Translation initiation factor IF3, N-terminal domain"/>
    <property type="match status" value="1"/>
</dbReference>
<dbReference type="PROSITE" id="PS00938">
    <property type="entry name" value="IF3"/>
    <property type="match status" value="1"/>
</dbReference>
<gene>
    <name evidence="1" type="primary">infC</name>
</gene>
<keyword id="KW-0150">Chloroplast</keyword>
<keyword id="KW-0396">Initiation factor</keyword>
<keyword id="KW-0934">Plastid</keyword>
<keyword id="KW-0648">Protein biosynthesis</keyword>
<keyword id="KW-1185">Reference proteome</keyword>
<name>IF3C_CYAM1</name>
<organism>
    <name type="scientific">Cyanidioschyzon merolae (strain NIES-3377 / 10D)</name>
    <name type="common">Unicellular red alga</name>
    <dbReference type="NCBI Taxonomy" id="280699"/>
    <lineage>
        <taxon>Eukaryota</taxon>
        <taxon>Rhodophyta</taxon>
        <taxon>Bangiophyceae</taxon>
        <taxon>Cyanidiales</taxon>
        <taxon>Cyanidiaceae</taxon>
        <taxon>Cyanidioschyzon</taxon>
    </lineage>
</organism>
<feature type="chain" id="PRO_0000177615" description="Translation initiation factor IF-3, chloroplastic">
    <location>
        <begin position="1"/>
        <end position="175"/>
    </location>
</feature>
<sequence>MHLVFLLMKFQMKLNESIRYASILVIDESGNPLGVFTSEQGRQLAAKKGLDLLLINPNADPPVCKIVNYGKYKFELEKKAKAKRKNQSQLKEIQMSYNMEEHDYQVRLSQACKFLKAGDKVKVTLMLKGREMQHLELAQNKMAQFQADVSSLAQLAKPPSQEGRNLSAIFVPKKS</sequence>
<protein>
    <recommendedName>
        <fullName evidence="1">Translation initiation factor IF-3, chloroplastic</fullName>
    </recommendedName>
</protein>
<comment type="function">
    <text evidence="1">IF-3 binds to the 30S ribosomal subunit and shifts the equilibrium between 70S ribosomes and their 50S and 30S subunits in favor of the free subunits, thus enhancing the availability of 30S subunits on which protein synthesis initiation begins.</text>
</comment>
<comment type="subunit">
    <text evidence="1">Monomer.</text>
</comment>
<comment type="subcellular location">
    <subcellularLocation>
        <location>Plastid</location>
        <location>Chloroplast</location>
    </subcellularLocation>
</comment>
<comment type="similarity">
    <text evidence="1">Belongs to the IF-3 family.</text>
</comment>
<evidence type="ECO:0000255" key="1">
    <source>
        <dbReference type="HAMAP-Rule" id="MF_00080"/>
    </source>
</evidence>
<reference key="1">
    <citation type="journal article" date="2003" name="DNA Res.">
        <title>Complete sequence and analysis of the plastid genome of the unicellular red alga Cyanidioschyzon merolae.</title>
        <authorList>
            <person name="Ohta N."/>
            <person name="Matsuzaki M."/>
            <person name="Misumi O."/>
            <person name="Miyagishima S.-Y."/>
            <person name="Nozaki H."/>
            <person name="Tanaka K."/>
            <person name="Shin-i T."/>
            <person name="Kohara Y."/>
            <person name="Kuroiwa T."/>
        </authorList>
    </citation>
    <scope>NUCLEOTIDE SEQUENCE [LARGE SCALE GENOMIC DNA]</scope>
    <source>
        <strain>NIES-3377 / 10D</strain>
    </source>
</reference>
<accession>Q85G77</accession>